<dbReference type="EC" id="7.1.2.2" evidence="1"/>
<dbReference type="EMBL" id="CP000238">
    <property type="protein sequence ID" value="ABF14178.1"/>
    <property type="molecule type" value="Genomic_DNA"/>
</dbReference>
<dbReference type="RefSeq" id="WP_011520343.1">
    <property type="nucleotide sequence ID" value="NC_007984.1"/>
</dbReference>
<dbReference type="SMR" id="Q1LTV4"/>
<dbReference type="STRING" id="374463.BCI_0141"/>
<dbReference type="KEGG" id="bci:BCI_0141"/>
<dbReference type="HOGENOM" id="CLU_022398_0_2_6"/>
<dbReference type="OrthoDB" id="9801639at2"/>
<dbReference type="Proteomes" id="UP000002427">
    <property type="component" value="Chromosome"/>
</dbReference>
<dbReference type="GO" id="GO:0005886">
    <property type="term" value="C:plasma membrane"/>
    <property type="evidence" value="ECO:0007669"/>
    <property type="project" value="UniProtKB-SubCell"/>
</dbReference>
<dbReference type="GO" id="GO:0045259">
    <property type="term" value="C:proton-transporting ATP synthase complex"/>
    <property type="evidence" value="ECO:0007669"/>
    <property type="project" value="UniProtKB-KW"/>
</dbReference>
<dbReference type="GO" id="GO:0005524">
    <property type="term" value="F:ATP binding"/>
    <property type="evidence" value="ECO:0007669"/>
    <property type="project" value="UniProtKB-UniRule"/>
</dbReference>
<dbReference type="GO" id="GO:0016887">
    <property type="term" value="F:ATP hydrolysis activity"/>
    <property type="evidence" value="ECO:0007669"/>
    <property type="project" value="InterPro"/>
</dbReference>
<dbReference type="GO" id="GO:0046933">
    <property type="term" value="F:proton-transporting ATP synthase activity, rotational mechanism"/>
    <property type="evidence" value="ECO:0007669"/>
    <property type="project" value="UniProtKB-UniRule"/>
</dbReference>
<dbReference type="CDD" id="cd18110">
    <property type="entry name" value="ATP-synt_F1_beta_C"/>
    <property type="match status" value="1"/>
</dbReference>
<dbReference type="CDD" id="cd18115">
    <property type="entry name" value="ATP-synt_F1_beta_N"/>
    <property type="match status" value="1"/>
</dbReference>
<dbReference type="CDD" id="cd01133">
    <property type="entry name" value="F1-ATPase_beta_CD"/>
    <property type="match status" value="1"/>
</dbReference>
<dbReference type="FunFam" id="1.10.1140.10:FF:000001">
    <property type="entry name" value="ATP synthase subunit beta"/>
    <property type="match status" value="1"/>
</dbReference>
<dbReference type="FunFam" id="2.40.10.170:FF:000003">
    <property type="entry name" value="ATP synthase subunit beta"/>
    <property type="match status" value="1"/>
</dbReference>
<dbReference type="FunFam" id="3.40.50.300:FF:000004">
    <property type="entry name" value="ATP synthase subunit beta"/>
    <property type="match status" value="1"/>
</dbReference>
<dbReference type="Gene3D" id="2.40.10.170">
    <property type="match status" value="1"/>
</dbReference>
<dbReference type="Gene3D" id="1.10.1140.10">
    <property type="entry name" value="Bovine Mitochondrial F1-atpase, Atp Synthase Beta Chain, Chain D, domain 3"/>
    <property type="match status" value="1"/>
</dbReference>
<dbReference type="Gene3D" id="3.40.50.300">
    <property type="entry name" value="P-loop containing nucleotide triphosphate hydrolases"/>
    <property type="match status" value="1"/>
</dbReference>
<dbReference type="HAMAP" id="MF_01347">
    <property type="entry name" value="ATP_synth_beta_bact"/>
    <property type="match status" value="1"/>
</dbReference>
<dbReference type="InterPro" id="IPR003593">
    <property type="entry name" value="AAA+_ATPase"/>
</dbReference>
<dbReference type="InterPro" id="IPR055190">
    <property type="entry name" value="ATP-synt_VA_C"/>
</dbReference>
<dbReference type="InterPro" id="IPR005722">
    <property type="entry name" value="ATP_synth_F1_bsu"/>
</dbReference>
<dbReference type="InterPro" id="IPR020003">
    <property type="entry name" value="ATPase_a/bsu_AS"/>
</dbReference>
<dbReference type="InterPro" id="IPR050053">
    <property type="entry name" value="ATPase_alpha/beta_chains"/>
</dbReference>
<dbReference type="InterPro" id="IPR004100">
    <property type="entry name" value="ATPase_F1/V1/A1_a/bsu_N"/>
</dbReference>
<dbReference type="InterPro" id="IPR036121">
    <property type="entry name" value="ATPase_F1/V1/A1_a/bsu_N_sf"/>
</dbReference>
<dbReference type="InterPro" id="IPR000194">
    <property type="entry name" value="ATPase_F1/V1/A1_a/bsu_nucl-bd"/>
</dbReference>
<dbReference type="InterPro" id="IPR024034">
    <property type="entry name" value="ATPase_F1/V1_b/a_C"/>
</dbReference>
<dbReference type="InterPro" id="IPR027417">
    <property type="entry name" value="P-loop_NTPase"/>
</dbReference>
<dbReference type="NCBIfam" id="TIGR01039">
    <property type="entry name" value="atpD"/>
    <property type="match status" value="1"/>
</dbReference>
<dbReference type="PANTHER" id="PTHR15184">
    <property type="entry name" value="ATP SYNTHASE"/>
    <property type="match status" value="1"/>
</dbReference>
<dbReference type="PANTHER" id="PTHR15184:SF71">
    <property type="entry name" value="ATP SYNTHASE SUBUNIT BETA, MITOCHONDRIAL"/>
    <property type="match status" value="1"/>
</dbReference>
<dbReference type="Pfam" id="PF00006">
    <property type="entry name" value="ATP-synt_ab"/>
    <property type="match status" value="1"/>
</dbReference>
<dbReference type="Pfam" id="PF02874">
    <property type="entry name" value="ATP-synt_ab_N"/>
    <property type="match status" value="1"/>
</dbReference>
<dbReference type="Pfam" id="PF22919">
    <property type="entry name" value="ATP-synt_VA_C"/>
    <property type="match status" value="1"/>
</dbReference>
<dbReference type="SMART" id="SM00382">
    <property type="entry name" value="AAA"/>
    <property type="match status" value="1"/>
</dbReference>
<dbReference type="SUPFAM" id="SSF47917">
    <property type="entry name" value="C-terminal domain of alpha and beta subunits of F1 ATP synthase"/>
    <property type="match status" value="1"/>
</dbReference>
<dbReference type="SUPFAM" id="SSF50615">
    <property type="entry name" value="N-terminal domain of alpha and beta subunits of F1 ATP synthase"/>
    <property type="match status" value="1"/>
</dbReference>
<dbReference type="SUPFAM" id="SSF52540">
    <property type="entry name" value="P-loop containing nucleoside triphosphate hydrolases"/>
    <property type="match status" value="1"/>
</dbReference>
<dbReference type="PROSITE" id="PS00152">
    <property type="entry name" value="ATPASE_ALPHA_BETA"/>
    <property type="match status" value="1"/>
</dbReference>
<organism>
    <name type="scientific">Baumannia cicadellinicola subsp. Homalodisca coagulata</name>
    <dbReference type="NCBI Taxonomy" id="374463"/>
    <lineage>
        <taxon>Bacteria</taxon>
        <taxon>Pseudomonadati</taxon>
        <taxon>Pseudomonadota</taxon>
        <taxon>Gammaproteobacteria</taxon>
        <taxon>Candidatus Palibaumannia</taxon>
    </lineage>
</organism>
<comment type="function">
    <text evidence="1">Produces ATP from ADP in the presence of a proton gradient across the membrane. The catalytic sites are hosted primarily by the beta subunits.</text>
</comment>
<comment type="catalytic activity">
    <reaction evidence="1">
        <text>ATP + H2O + 4 H(+)(in) = ADP + phosphate + 5 H(+)(out)</text>
        <dbReference type="Rhea" id="RHEA:57720"/>
        <dbReference type="ChEBI" id="CHEBI:15377"/>
        <dbReference type="ChEBI" id="CHEBI:15378"/>
        <dbReference type="ChEBI" id="CHEBI:30616"/>
        <dbReference type="ChEBI" id="CHEBI:43474"/>
        <dbReference type="ChEBI" id="CHEBI:456216"/>
        <dbReference type="EC" id="7.1.2.2"/>
    </reaction>
</comment>
<comment type="subunit">
    <text evidence="1">F-type ATPases have 2 components, CF(1) - the catalytic core - and CF(0) - the membrane proton channel. CF(1) has five subunits: alpha(3), beta(3), gamma(1), delta(1), epsilon(1). CF(0) has three main subunits: a(1), b(2) and c(9-12). The alpha and beta chains form an alternating ring which encloses part of the gamma chain. CF(1) is attached to CF(0) by a central stalk formed by the gamma and epsilon chains, while a peripheral stalk is formed by the delta and b chains.</text>
</comment>
<comment type="subcellular location">
    <subcellularLocation>
        <location evidence="1">Cell membrane</location>
        <topology evidence="1">Peripheral membrane protein</topology>
    </subcellularLocation>
</comment>
<comment type="similarity">
    <text evidence="1">Belongs to the ATPase alpha/beta chains family.</text>
</comment>
<reference key="1">
    <citation type="journal article" date="2006" name="PLoS Biol.">
        <title>Metabolic complementarity and genomics of the dual bacterial symbiosis of sharpshooters.</title>
        <authorList>
            <person name="Wu D."/>
            <person name="Daugherty S.C."/>
            <person name="Van Aken S.E."/>
            <person name="Pai G.H."/>
            <person name="Watkins K.L."/>
            <person name="Khouri H."/>
            <person name="Tallon L.J."/>
            <person name="Zaborsky J.M."/>
            <person name="Dunbar H.E."/>
            <person name="Tran P.L."/>
            <person name="Moran N.A."/>
            <person name="Eisen J.A."/>
        </authorList>
    </citation>
    <scope>NUCLEOTIDE SEQUENCE [LARGE SCALE GENOMIC DNA]</scope>
</reference>
<feature type="chain" id="PRO_0000254216" description="ATP synthase subunit beta">
    <location>
        <begin position="1"/>
        <end position="457"/>
    </location>
</feature>
<feature type="binding site" evidence="1">
    <location>
        <begin position="150"/>
        <end position="157"/>
    </location>
    <ligand>
        <name>ATP</name>
        <dbReference type="ChEBI" id="CHEBI:30616"/>
    </ligand>
</feature>
<evidence type="ECO:0000255" key="1">
    <source>
        <dbReference type="HAMAP-Rule" id="MF_01347"/>
    </source>
</evidence>
<accession>Q1LTV4</accession>
<keyword id="KW-0066">ATP synthesis</keyword>
<keyword id="KW-0067">ATP-binding</keyword>
<keyword id="KW-1003">Cell membrane</keyword>
<keyword id="KW-0139">CF(1)</keyword>
<keyword id="KW-0375">Hydrogen ion transport</keyword>
<keyword id="KW-0406">Ion transport</keyword>
<keyword id="KW-0472">Membrane</keyword>
<keyword id="KW-0547">Nucleotide-binding</keyword>
<keyword id="KW-1185">Reference proteome</keyword>
<keyword id="KW-1278">Translocase</keyword>
<keyword id="KW-0813">Transport</keyword>
<sequence length="457" mass="50191">MTTGKIIQVIGAVVDVEFPQNIVPKVYNALEVTNGKNKLILEVEQQLGSGIVRCIAMGVSEGLRRGLTVIDLGHAIKVPVGKSTLSRIMNVLGEPIDMKGIINAEEHWSIHRSAPRYEELALSQEILETGIKVIDLMCPLVKGGKAGLFGGAGVGKTVNMMELIRNIAIEHAGYSVFTGVGERTREGNDFYHEMKDSNVLDKVSLVYGQMNEPPGNRFRVALTGLTIAEKFRDEGHDVLLFIDNIYRYTLAGAEVSALLGRMPSAVGYQPTLSEEMGLLQERITSTKYGSITSIQAVYVPADDLTDPAPATTFSHLDATIVLSRQIASLGIYPAIDPLESTSRQLDPLVVGQKHYDVALGVQGILQRYQELKDIIAILGIDELSEDDKMVVSRARKIQRFLSQPFFVAEVFTGSQGKYVSLQETISGFEDIINGKYDHLPEQKFYMIGSINEAMTKE</sequence>
<protein>
    <recommendedName>
        <fullName evidence="1">ATP synthase subunit beta</fullName>
        <ecNumber evidence="1">7.1.2.2</ecNumber>
    </recommendedName>
    <alternativeName>
        <fullName evidence="1">ATP synthase F1 sector subunit beta</fullName>
    </alternativeName>
    <alternativeName>
        <fullName evidence="1">F-ATPase subunit beta</fullName>
    </alternativeName>
</protein>
<gene>
    <name evidence="1" type="primary">atpD</name>
    <name type="ordered locus">BCI_0141</name>
</gene>
<name>ATPB_BAUCH</name>
<proteinExistence type="inferred from homology"/>